<organism>
    <name type="scientific">Listeria monocytogenes serovar 1/2a (strain ATCC BAA-679 / EGD-e)</name>
    <dbReference type="NCBI Taxonomy" id="169963"/>
    <lineage>
        <taxon>Bacteria</taxon>
        <taxon>Bacillati</taxon>
        <taxon>Bacillota</taxon>
        <taxon>Bacilli</taxon>
        <taxon>Bacillales</taxon>
        <taxon>Listeriaceae</taxon>
        <taxon>Listeria</taxon>
    </lineage>
</organism>
<reference key="1">
    <citation type="journal article" date="2001" name="Science">
        <title>Comparative genomics of Listeria species.</title>
        <authorList>
            <person name="Glaser P."/>
            <person name="Frangeul L."/>
            <person name="Buchrieser C."/>
            <person name="Rusniok C."/>
            <person name="Amend A."/>
            <person name="Baquero F."/>
            <person name="Berche P."/>
            <person name="Bloecker H."/>
            <person name="Brandt P."/>
            <person name="Chakraborty T."/>
            <person name="Charbit A."/>
            <person name="Chetouani F."/>
            <person name="Couve E."/>
            <person name="de Daruvar A."/>
            <person name="Dehoux P."/>
            <person name="Domann E."/>
            <person name="Dominguez-Bernal G."/>
            <person name="Duchaud E."/>
            <person name="Durant L."/>
            <person name="Dussurget O."/>
            <person name="Entian K.-D."/>
            <person name="Fsihi H."/>
            <person name="Garcia-del Portillo F."/>
            <person name="Garrido P."/>
            <person name="Gautier L."/>
            <person name="Goebel W."/>
            <person name="Gomez-Lopez N."/>
            <person name="Hain T."/>
            <person name="Hauf J."/>
            <person name="Jackson D."/>
            <person name="Jones L.-M."/>
            <person name="Kaerst U."/>
            <person name="Kreft J."/>
            <person name="Kuhn M."/>
            <person name="Kunst F."/>
            <person name="Kurapkat G."/>
            <person name="Madueno E."/>
            <person name="Maitournam A."/>
            <person name="Mata Vicente J."/>
            <person name="Ng E."/>
            <person name="Nedjari H."/>
            <person name="Nordsiek G."/>
            <person name="Novella S."/>
            <person name="de Pablos B."/>
            <person name="Perez-Diaz J.-C."/>
            <person name="Purcell R."/>
            <person name="Remmel B."/>
            <person name="Rose M."/>
            <person name="Schlueter T."/>
            <person name="Simoes N."/>
            <person name="Tierrez A."/>
            <person name="Vazquez-Boland J.-A."/>
            <person name="Voss H."/>
            <person name="Wehland J."/>
            <person name="Cossart P."/>
        </authorList>
    </citation>
    <scope>NUCLEOTIDE SEQUENCE [LARGE SCALE GENOMIC DNA]</scope>
    <source>
        <strain>ATCC BAA-679 / EGD-e</strain>
    </source>
</reference>
<keyword id="KW-0472">Membrane</keyword>
<keyword id="KW-1185">Reference proteome</keyword>
<keyword id="KW-0812">Transmembrane</keyword>
<keyword id="KW-1133">Transmembrane helix</keyword>
<dbReference type="EMBL" id="AL591978">
    <property type="protein sequence ID" value="CAC99384.1"/>
    <property type="molecule type" value="Genomic_DNA"/>
</dbReference>
<dbReference type="PIR" id="AB1238">
    <property type="entry name" value="AB1238"/>
</dbReference>
<dbReference type="RefSeq" id="NP_464831.1">
    <property type="nucleotide sequence ID" value="NC_003210.1"/>
</dbReference>
<dbReference type="RefSeq" id="WP_003723442.1">
    <property type="nucleotide sequence ID" value="NZ_CP149495.1"/>
</dbReference>
<dbReference type="SMR" id="P67288"/>
<dbReference type="STRING" id="169963.gene:17593963"/>
<dbReference type="PaxDb" id="169963-lmo1306"/>
<dbReference type="EnsemblBacteria" id="CAC99384">
    <property type="protein sequence ID" value="CAC99384"/>
    <property type="gene ID" value="CAC99384"/>
</dbReference>
<dbReference type="GeneID" id="987683"/>
<dbReference type="KEGG" id="lmo:lmo1306"/>
<dbReference type="PATRIC" id="fig|169963.11.peg.1343"/>
<dbReference type="eggNOG" id="COG3763">
    <property type="taxonomic scope" value="Bacteria"/>
</dbReference>
<dbReference type="HOGENOM" id="CLU_180108_0_1_9"/>
<dbReference type="PhylomeDB" id="P67288"/>
<dbReference type="BioCyc" id="LMON169963:LMO1306-MONOMER"/>
<dbReference type="Proteomes" id="UP000000817">
    <property type="component" value="Chromosome"/>
</dbReference>
<dbReference type="GO" id="GO:0005886">
    <property type="term" value="C:plasma membrane"/>
    <property type="evidence" value="ECO:0007669"/>
    <property type="project" value="UniProtKB-UniRule"/>
</dbReference>
<dbReference type="HAMAP" id="MF_00363">
    <property type="entry name" value="UPF0154"/>
    <property type="match status" value="1"/>
</dbReference>
<dbReference type="InterPro" id="IPR005359">
    <property type="entry name" value="UPF0154"/>
</dbReference>
<dbReference type="NCBIfam" id="NF002503">
    <property type="entry name" value="PRK01844.1"/>
    <property type="match status" value="1"/>
</dbReference>
<dbReference type="Pfam" id="PF03672">
    <property type="entry name" value="UPF0154"/>
    <property type="match status" value="1"/>
</dbReference>
<evidence type="ECO:0000255" key="1">
    <source>
        <dbReference type="HAMAP-Rule" id="MF_00363"/>
    </source>
</evidence>
<evidence type="ECO:0000256" key="2">
    <source>
        <dbReference type="SAM" id="MobiDB-lite"/>
    </source>
</evidence>
<gene>
    <name type="ordered locus">lmo1306</name>
</gene>
<comment type="subcellular location">
    <subcellularLocation>
        <location evidence="1">Membrane</location>
        <topology evidence="1">Single-pass membrane protein</topology>
    </subcellularLocation>
</comment>
<comment type="similarity">
    <text evidence="1">Belongs to the UPF0154 family.</text>
</comment>
<protein>
    <recommendedName>
        <fullName evidence="1">UPF0154 protein lmo1306</fullName>
    </recommendedName>
</protein>
<proteinExistence type="inferred from homology"/>
<sequence>MWIYILVGIICLLAGLAGGFFIARRYMMSYLKNNPPINEQMLQMMMAQMGQKPSQKKINQMMSAMNKQQEKEKPKKAKK</sequence>
<name>Y1306_LISMO</name>
<feature type="chain" id="PRO_0000214966" description="UPF0154 protein lmo1306">
    <location>
        <begin position="1"/>
        <end position="79"/>
    </location>
</feature>
<feature type="transmembrane region" description="Helical" evidence="1">
    <location>
        <begin position="2"/>
        <end position="22"/>
    </location>
</feature>
<feature type="region of interest" description="Disordered" evidence="2">
    <location>
        <begin position="57"/>
        <end position="79"/>
    </location>
</feature>
<feature type="compositionally biased region" description="Polar residues" evidence="2">
    <location>
        <begin position="57"/>
        <end position="66"/>
    </location>
</feature>
<accession>P67288</accession>
<accession>Q92C47</accession>